<name>TPIS_CHRSD</name>
<sequence length="249" mass="26702">MRTPLIAGNWKMNGSSALVDAFGQAFADADLPESVEVVVHPPFPYLDAARRALAGGPVKLGAQTLNPLHAGARTGEVSGRMLKEFDVEYVLVGHSERRELYRESDDDVYDRLLAALNADLRPILCVGETLEARDAGRTRDVVLRQVGHALAPLEPAQRARVTIAYEPVWAIGTGRTATPEQAQEVMAAIREYQAGFDPALAQSMRLIYGGSMNAANAAELLAQPDIDGGLVGGASLKVDDFLAICHSAR</sequence>
<feature type="chain" id="PRO_0000307449" description="Triosephosphate isomerase">
    <location>
        <begin position="1"/>
        <end position="249"/>
    </location>
</feature>
<feature type="active site" description="Electrophile" evidence="1">
    <location>
        <position position="94"/>
    </location>
</feature>
<feature type="active site" description="Proton acceptor" evidence="1">
    <location>
        <position position="166"/>
    </location>
</feature>
<feature type="binding site" evidence="1">
    <location>
        <begin position="9"/>
        <end position="11"/>
    </location>
    <ligand>
        <name>substrate</name>
    </ligand>
</feature>
<feature type="binding site" evidence="1">
    <location>
        <position position="172"/>
    </location>
    <ligand>
        <name>substrate</name>
    </ligand>
</feature>
<feature type="binding site" evidence="1">
    <location>
        <position position="211"/>
    </location>
    <ligand>
        <name>substrate</name>
    </ligand>
</feature>
<feature type="binding site" evidence="1">
    <location>
        <begin position="232"/>
        <end position="233"/>
    </location>
    <ligand>
        <name>substrate</name>
    </ligand>
</feature>
<gene>
    <name evidence="1" type="primary">tpiA</name>
    <name type="ordered locus">Csal_3078</name>
</gene>
<dbReference type="EC" id="5.3.1.1" evidence="1"/>
<dbReference type="EMBL" id="CP000285">
    <property type="protein sequence ID" value="ABE60422.1"/>
    <property type="molecule type" value="Genomic_DNA"/>
</dbReference>
<dbReference type="RefSeq" id="WP_011508368.1">
    <property type="nucleotide sequence ID" value="NC_007963.1"/>
</dbReference>
<dbReference type="SMR" id="Q1QSY6"/>
<dbReference type="STRING" id="290398.Csal_3078"/>
<dbReference type="GeneID" id="95335774"/>
<dbReference type="KEGG" id="csa:Csal_3078"/>
<dbReference type="eggNOG" id="COG0149">
    <property type="taxonomic scope" value="Bacteria"/>
</dbReference>
<dbReference type="HOGENOM" id="CLU_024251_2_3_6"/>
<dbReference type="OrthoDB" id="9809429at2"/>
<dbReference type="UniPathway" id="UPA00109">
    <property type="reaction ID" value="UER00189"/>
</dbReference>
<dbReference type="UniPathway" id="UPA00138"/>
<dbReference type="Proteomes" id="UP000000239">
    <property type="component" value="Chromosome"/>
</dbReference>
<dbReference type="GO" id="GO:0005829">
    <property type="term" value="C:cytosol"/>
    <property type="evidence" value="ECO:0007669"/>
    <property type="project" value="TreeGrafter"/>
</dbReference>
<dbReference type="GO" id="GO:0004807">
    <property type="term" value="F:triose-phosphate isomerase activity"/>
    <property type="evidence" value="ECO:0007669"/>
    <property type="project" value="UniProtKB-UniRule"/>
</dbReference>
<dbReference type="GO" id="GO:0006094">
    <property type="term" value="P:gluconeogenesis"/>
    <property type="evidence" value="ECO:0007669"/>
    <property type="project" value="UniProtKB-UniRule"/>
</dbReference>
<dbReference type="GO" id="GO:0046166">
    <property type="term" value="P:glyceraldehyde-3-phosphate biosynthetic process"/>
    <property type="evidence" value="ECO:0007669"/>
    <property type="project" value="TreeGrafter"/>
</dbReference>
<dbReference type="GO" id="GO:0019563">
    <property type="term" value="P:glycerol catabolic process"/>
    <property type="evidence" value="ECO:0007669"/>
    <property type="project" value="TreeGrafter"/>
</dbReference>
<dbReference type="GO" id="GO:0006096">
    <property type="term" value="P:glycolytic process"/>
    <property type="evidence" value="ECO:0007669"/>
    <property type="project" value="UniProtKB-UniRule"/>
</dbReference>
<dbReference type="CDD" id="cd00311">
    <property type="entry name" value="TIM"/>
    <property type="match status" value="1"/>
</dbReference>
<dbReference type="FunFam" id="3.20.20.70:FF:000016">
    <property type="entry name" value="Triosephosphate isomerase"/>
    <property type="match status" value="1"/>
</dbReference>
<dbReference type="Gene3D" id="3.20.20.70">
    <property type="entry name" value="Aldolase class I"/>
    <property type="match status" value="1"/>
</dbReference>
<dbReference type="HAMAP" id="MF_00147_B">
    <property type="entry name" value="TIM_B"/>
    <property type="match status" value="1"/>
</dbReference>
<dbReference type="InterPro" id="IPR013785">
    <property type="entry name" value="Aldolase_TIM"/>
</dbReference>
<dbReference type="InterPro" id="IPR035990">
    <property type="entry name" value="TIM_sf"/>
</dbReference>
<dbReference type="InterPro" id="IPR022896">
    <property type="entry name" value="TrioseP_Isoase_bac/euk"/>
</dbReference>
<dbReference type="InterPro" id="IPR000652">
    <property type="entry name" value="Triosephosphate_isomerase"/>
</dbReference>
<dbReference type="InterPro" id="IPR020861">
    <property type="entry name" value="Triosephosphate_isomerase_AS"/>
</dbReference>
<dbReference type="NCBIfam" id="TIGR00419">
    <property type="entry name" value="tim"/>
    <property type="match status" value="1"/>
</dbReference>
<dbReference type="PANTHER" id="PTHR21139">
    <property type="entry name" value="TRIOSEPHOSPHATE ISOMERASE"/>
    <property type="match status" value="1"/>
</dbReference>
<dbReference type="PANTHER" id="PTHR21139:SF42">
    <property type="entry name" value="TRIOSEPHOSPHATE ISOMERASE"/>
    <property type="match status" value="1"/>
</dbReference>
<dbReference type="Pfam" id="PF00121">
    <property type="entry name" value="TIM"/>
    <property type="match status" value="1"/>
</dbReference>
<dbReference type="SUPFAM" id="SSF51351">
    <property type="entry name" value="Triosephosphate isomerase (TIM)"/>
    <property type="match status" value="1"/>
</dbReference>
<dbReference type="PROSITE" id="PS00171">
    <property type="entry name" value="TIM_1"/>
    <property type="match status" value="1"/>
</dbReference>
<dbReference type="PROSITE" id="PS51440">
    <property type="entry name" value="TIM_2"/>
    <property type="match status" value="1"/>
</dbReference>
<keyword id="KW-0963">Cytoplasm</keyword>
<keyword id="KW-0312">Gluconeogenesis</keyword>
<keyword id="KW-0324">Glycolysis</keyword>
<keyword id="KW-0413">Isomerase</keyword>
<keyword id="KW-1185">Reference proteome</keyword>
<organism>
    <name type="scientific">Chromohalobacter salexigens (strain ATCC BAA-138 / DSM 3043 / CIP 106854 / NCIMB 13768 / 1H11)</name>
    <dbReference type="NCBI Taxonomy" id="290398"/>
    <lineage>
        <taxon>Bacteria</taxon>
        <taxon>Pseudomonadati</taxon>
        <taxon>Pseudomonadota</taxon>
        <taxon>Gammaproteobacteria</taxon>
        <taxon>Oceanospirillales</taxon>
        <taxon>Halomonadaceae</taxon>
        <taxon>Chromohalobacter</taxon>
    </lineage>
</organism>
<comment type="function">
    <text evidence="1">Involved in the gluconeogenesis. Catalyzes stereospecifically the conversion of dihydroxyacetone phosphate (DHAP) to D-glyceraldehyde-3-phosphate (G3P).</text>
</comment>
<comment type="catalytic activity">
    <reaction evidence="1">
        <text>D-glyceraldehyde 3-phosphate = dihydroxyacetone phosphate</text>
        <dbReference type="Rhea" id="RHEA:18585"/>
        <dbReference type="ChEBI" id="CHEBI:57642"/>
        <dbReference type="ChEBI" id="CHEBI:59776"/>
        <dbReference type="EC" id="5.3.1.1"/>
    </reaction>
</comment>
<comment type="pathway">
    <text evidence="1">Carbohydrate biosynthesis; gluconeogenesis.</text>
</comment>
<comment type="pathway">
    <text evidence="1">Carbohydrate degradation; glycolysis; D-glyceraldehyde 3-phosphate from glycerone phosphate: step 1/1.</text>
</comment>
<comment type="subunit">
    <text evidence="1">Homodimer.</text>
</comment>
<comment type="subcellular location">
    <subcellularLocation>
        <location evidence="1">Cytoplasm</location>
    </subcellularLocation>
</comment>
<comment type="similarity">
    <text evidence="1">Belongs to the triosephosphate isomerase family.</text>
</comment>
<accession>Q1QSY6</accession>
<reference key="1">
    <citation type="journal article" date="2011" name="Stand. Genomic Sci.">
        <title>Complete genome sequence of the halophilic and highly halotolerant Chromohalobacter salexigens type strain (1H11(T)).</title>
        <authorList>
            <person name="Copeland A."/>
            <person name="O'Connor K."/>
            <person name="Lucas S."/>
            <person name="Lapidus A."/>
            <person name="Berry K.W."/>
            <person name="Detter J.C."/>
            <person name="Del Rio T.G."/>
            <person name="Hammon N."/>
            <person name="Dalin E."/>
            <person name="Tice H."/>
            <person name="Pitluck S."/>
            <person name="Bruce D."/>
            <person name="Goodwin L."/>
            <person name="Han C."/>
            <person name="Tapia R."/>
            <person name="Saunders E."/>
            <person name="Schmutz J."/>
            <person name="Brettin T."/>
            <person name="Larimer F."/>
            <person name="Land M."/>
            <person name="Hauser L."/>
            <person name="Vargas C."/>
            <person name="Nieto J.J."/>
            <person name="Kyrpides N.C."/>
            <person name="Ivanova N."/>
            <person name="Goker M."/>
            <person name="Klenk H.P."/>
            <person name="Csonka L.N."/>
            <person name="Woyke T."/>
        </authorList>
    </citation>
    <scope>NUCLEOTIDE SEQUENCE [LARGE SCALE GENOMIC DNA]</scope>
    <source>
        <strain>ATCC BAA-138 / DSM 3043 / CIP 106854 / NCIMB 13768 / 1H11</strain>
    </source>
</reference>
<protein>
    <recommendedName>
        <fullName evidence="1">Triosephosphate isomerase</fullName>
        <shortName evidence="1">TIM</shortName>
        <shortName evidence="1">TPI</shortName>
        <ecNumber evidence="1">5.3.1.1</ecNumber>
    </recommendedName>
    <alternativeName>
        <fullName evidence="1">Triose-phosphate isomerase</fullName>
    </alternativeName>
</protein>
<evidence type="ECO:0000255" key="1">
    <source>
        <dbReference type="HAMAP-Rule" id="MF_00147"/>
    </source>
</evidence>
<proteinExistence type="inferred from homology"/>